<proteinExistence type="inferred from homology"/>
<protein>
    <recommendedName>
        <fullName evidence="1">Transcription antitermination protein NusB</fullName>
    </recommendedName>
    <alternativeName>
        <fullName evidence="1">Antitermination factor NusB</fullName>
    </alternativeName>
</protein>
<accession>A6VPE8</accession>
<evidence type="ECO:0000255" key="1">
    <source>
        <dbReference type="HAMAP-Rule" id="MF_00073"/>
    </source>
</evidence>
<gene>
    <name evidence="1" type="primary">nusB</name>
    <name type="ordered locus">Asuc_1487</name>
</gene>
<feature type="chain" id="PRO_1000071189" description="Transcription antitermination protein NusB">
    <location>
        <begin position="1"/>
        <end position="142"/>
    </location>
</feature>
<keyword id="KW-1185">Reference proteome</keyword>
<keyword id="KW-0694">RNA-binding</keyword>
<keyword id="KW-0804">Transcription</keyword>
<keyword id="KW-0889">Transcription antitermination</keyword>
<keyword id="KW-0805">Transcription regulation</keyword>
<name>NUSB_ACTSZ</name>
<organism>
    <name type="scientific">Actinobacillus succinogenes (strain ATCC 55618 / DSM 22257 / CCUG 43843 / 130Z)</name>
    <dbReference type="NCBI Taxonomy" id="339671"/>
    <lineage>
        <taxon>Bacteria</taxon>
        <taxon>Pseudomonadati</taxon>
        <taxon>Pseudomonadota</taxon>
        <taxon>Gammaproteobacteria</taxon>
        <taxon>Pasteurellales</taxon>
        <taxon>Pasteurellaceae</taxon>
        <taxon>Actinobacillus</taxon>
    </lineage>
</organism>
<dbReference type="EMBL" id="CP000746">
    <property type="protein sequence ID" value="ABR74845.1"/>
    <property type="molecule type" value="Genomic_DNA"/>
</dbReference>
<dbReference type="RefSeq" id="WP_012073222.1">
    <property type="nucleotide sequence ID" value="NC_009655.1"/>
</dbReference>
<dbReference type="SMR" id="A6VPE8"/>
<dbReference type="STRING" id="339671.Asuc_1487"/>
<dbReference type="KEGG" id="asu:Asuc_1487"/>
<dbReference type="eggNOG" id="COG0781">
    <property type="taxonomic scope" value="Bacteria"/>
</dbReference>
<dbReference type="HOGENOM" id="CLU_087843_4_1_6"/>
<dbReference type="OrthoDB" id="9789556at2"/>
<dbReference type="Proteomes" id="UP000001114">
    <property type="component" value="Chromosome"/>
</dbReference>
<dbReference type="GO" id="GO:0005829">
    <property type="term" value="C:cytosol"/>
    <property type="evidence" value="ECO:0007669"/>
    <property type="project" value="TreeGrafter"/>
</dbReference>
<dbReference type="GO" id="GO:0003723">
    <property type="term" value="F:RNA binding"/>
    <property type="evidence" value="ECO:0007669"/>
    <property type="project" value="UniProtKB-UniRule"/>
</dbReference>
<dbReference type="GO" id="GO:0006353">
    <property type="term" value="P:DNA-templated transcription termination"/>
    <property type="evidence" value="ECO:0007669"/>
    <property type="project" value="UniProtKB-UniRule"/>
</dbReference>
<dbReference type="GO" id="GO:0031564">
    <property type="term" value="P:transcription antitermination"/>
    <property type="evidence" value="ECO:0007669"/>
    <property type="project" value="UniProtKB-KW"/>
</dbReference>
<dbReference type="CDD" id="cd00619">
    <property type="entry name" value="Terminator_NusB"/>
    <property type="match status" value="1"/>
</dbReference>
<dbReference type="FunFam" id="1.10.940.10:FF:000001">
    <property type="entry name" value="Transcription antitermination factor NusB"/>
    <property type="match status" value="1"/>
</dbReference>
<dbReference type="Gene3D" id="1.10.940.10">
    <property type="entry name" value="NusB-like"/>
    <property type="match status" value="1"/>
</dbReference>
<dbReference type="HAMAP" id="MF_00073">
    <property type="entry name" value="NusB"/>
    <property type="match status" value="1"/>
</dbReference>
<dbReference type="InterPro" id="IPR035926">
    <property type="entry name" value="NusB-like_sf"/>
</dbReference>
<dbReference type="InterPro" id="IPR011605">
    <property type="entry name" value="NusB_fam"/>
</dbReference>
<dbReference type="InterPro" id="IPR006027">
    <property type="entry name" value="NusB_RsmB_TIM44"/>
</dbReference>
<dbReference type="NCBIfam" id="TIGR01951">
    <property type="entry name" value="nusB"/>
    <property type="match status" value="1"/>
</dbReference>
<dbReference type="PANTHER" id="PTHR11078:SF3">
    <property type="entry name" value="ANTITERMINATION NUSB DOMAIN-CONTAINING PROTEIN"/>
    <property type="match status" value="1"/>
</dbReference>
<dbReference type="PANTHER" id="PTHR11078">
    <property type="entry name" value="N UTILIZATION SUBSTANCE PROTEIN B-RELATED"/>
    <property type="match status" value="1"/>
</dbReference>
<dbReference type="Pfam" id="PF01029">
    <property type="entry name" value="NusB"/>
    <property type="match status" value="1"/>
</dbReference>
<dbReference type="SUPFAM" id="SSF48013">
    <property type="entry name" value="NusB-like"/>
    <property type="match status" value="1"/>
</dbReference>
<reference key="1">
    <citation type="journal article" date="2010" name="BMC Genomics">
        <title>A genomic perspective on the potential of Actinobacillus succinogenes for industrial succinate production.</title>
        <authorList>
            <person name="McKinlay J.B."/>
            <person name="Laivenieks M."/>
            <person name="Schindler B.D."/>
            <person name="McKinlay A.A."/>
            <person name="Siddaramappa S."/>
            <person name="Challacombe J.F."/>
            <person name="Lowry S.R."/>
            <person name="Clum A."/>
            <person name="Lapidus A.L."/>
            <person name="Burkhart K.B."/>
            <person name="Harkins V."/>
            <person name="Vieille C."/>
        </authorList>
    </citation>
    <scope>NUCLEOTIDE SEQUENCE [LARGE SCALE GENOMIC DNA]</scope>
    <source>
        <strain>ATCC 55618 / DSM 22257 / CCUG 43843 / 130Z</strain>
    </source>
</reference>
<comment type="function">
    <text evidence="1">Involved in transcription antitermination. Required for transcription of ribosomal RNA (rRNA) genes. Binds specifically to the boxA antiterminator sequence of the ribosomal RNA (rrn) operons.</text>
</comment>
<comment type="similarity">
    <text evidence="1">Belongs to the NusB family.</text>
</comment>
<sequence length="142" mass="16160">MAEQKKKVSPRRRARECAVQALYSWAVSNNDATEIELSFITEQDMKGVDTPYFRKLFRNTVTYLESVDVTIAPFLDRTSEELTPIEKAVLRLATYELKYEPDVPYKVAINEAIELAKTFGAEDSHKYINGVLDKIAPALGRK</sequence>